<keyword id="KW-0963">Cytoplasm</keyword>
<keyword id="KW-0396">Initiation factor</keyword>
<keyword id="KW-0648">Protein biosynthesis</keyword>
<organism>
    <name type="scientific">Methylobacterium radiotolerans (strain ATCC 27329 / DSM 1819 / JCM 2831 / NBRC 15690 / NCIMB 10815 / 0-1)</name>
    <dbReference type="NCBI Taxonomy" id="426355"/>
    <lineage>
        <taxon>Bacteria</taxon>
        <taxon>Pseudomonadati</taxon>
        <taxon>Pseudomonadota</taxon>
        <taxon>Alphaproteobacteria</taxon>
        <taxon>Hyphomicrobiales</taxon>
        <taxon>Methylobacteriaceae</taxon>
        <taxon>Methylobacterium</taxon>
    </lineage>
</organism>
<reference key="1">
    <citation type="submission" date="2008-03" db="EMBL/GenBank/DDBJ databases">
        <title>Complete sequence of chromosome of Methylobacterium radiotolerans JCM 2831.</title>
        <authorList>
            <consortium name="US DOE Joint Genome Institute"/>
            <person name="Copeland A."/>
            <person name="Lucas S."/>
            <person name="Lapidus A."/>
            <person name="Glavina del Rio T."/>
            <person name="Dalin E."/>
            <person name="Tice H."/>
            <person name="Bruce D."/>
            <person name="Goodwin L."/>
            <person name="Pitluck S."/>
            <person name="Kiss H."/>
            <person name="Brettin T."/>
            <person name="Detter J.C."/>
            <person name="Han C."/>
            <person name="Kuske C.R."/>
            <person name="Schmutz J."/>
            <person name="Larimer F."/>
            <person name="Land M."/>
            <person name="Hauser L."/>
            <person name="Kyrpides N."/>
            <person name="Mikhailova N."/>
            <person name="Marx C.J."/>
            <person name="Richardson P."/>
        </authorList>
    </citation>
    <scope>NUCLEOTIDE SEQUENCE [LARGE SCALE GENOMIC DNA]</scope>
    <source>
        <strain>ATCC 27329 / DSM 1819 / JCM 2831 / NBRC 15690 / NCIMB 10815 / 0-1</strain>
    </source>
</reference>
<accession>B1M6P9</accession>
<evidence type="ECO:0000255" key="1">
    <source>
        <dbReference type="HAMAP-Rule" id="MF_00080"/>
    </source>
</evidence>
<gene>
    <name evidence="1" type="primary">infC</name>
    <name type="ordered locus">Mrad2831_3158</name>
</gene>
<feature type="chain" id="PRO_1000202543" description="Translation initiation factor IF-3">
    <location>
        <begin position="1"/>
        <end position="173"/>
    </location>
</feature>
<proteinExistence type="inferred from homology"/>
<protein>
    <recommendedName>
        <fullName evidence="1">Translation initiation factor IF-3</fullName>
    </recommendedName>
</protein>
<name>IF3_METRJ</name>
<dbReference type="EMBL" id="CP001001">
    <property type="protein sequence ID" value="ACB25140.1"/>
    <property type="molecule type" value="Genomic_DNA"/>
</dbReference>
<dbReference type="SMR" id="B1M6P9"/>
<dbReference type="STRING" id="426355.Mrad2831_3158"/>
<dbReference type="KEGG" id="mrd:Mrad2831_3158"/>
<dbReference type="eggNOG" id="COG0290">
    <property type="taxonomic scope" value="Bacteria"/>
</dbReference>
<dbReference type="HOGENOM" id="CLU_054919_3_2_5"/>
<dbReference type="Proteomes" id="UP000006589">
    <property type="component" value="Chromosome"/>
</dbReference>
<dbReference type="GO" id="GO:0005829">
    <property type="term" value="C:cytosol"/>
    <property type="evidence" value="ECO:0007669"/>
    <property type="project" value="TreeGrafter"/>
</dbReference>
<dbReference type="GO" id="GO:0016020">
    <property type="term" value="C:membrane"/>
    <property type="evidence" value="ECO:0007669"/>
    <property type="project" value="TreeGrafter"/>
</dbReference>
<dbReference type="GO" id="GO:0043022">
    <property type="term" value="F:ribosome binding"/>
    <property type="evidence" value="ECO:0007669"/>
    <property type="project" value="TreeGrafter"/>
</dbReference>
<dbReference type="GO" id="GO:0003743">
    <property type="term" value="F:translation initiation factor activity"/>
    <property type="evidence" value="ECO:0007669"/>
    <property type="project" value="UniProtKB-UniRule"/>
</dbReference>
<dbReference type="GO" id="GO:0032790">
    <property type="term" value="P:ribosome disassembly"/>
    <property type="evidence" value="ECO:0007669"/>
    <property type="project" value="TreeGrafter"/>
</dbReference>
<dbReference type="FunFam" id="3.30.110.10:FF:000001">
    <property type="entry name" value="Translation initiation factor IF-3"/>
    <property type="match status" value="1"/>
</dbReference>
<dbReference type="Gene3D" id="3.30.110.10">
    <property type="entry name" value="Translation initiation factor 3 (IF-3), C-terminal domain"/>
    <property type="match status" value="1"/>
</dbReference>
<dbReference type="Gene3D" id="3.10.20.80">
    <property type="entry name" value="Translation initiation factor 3 (IF-3), N-terminal domain"/>
    <property type="match status" value="1"/>
</dbReference>
<dbReference type="HAMAP" id="MF_00080">
    <property type="entry name" value="IF_3"/>
    <property type="match status" value="1"/>
</dbReference>
<dbReference type="InterPro" id="IPR036788">
    <property type="entry name" value="T_IF-3_C_sf"/>
</dbReference>
<dbReference type="InterPro" id="IPR036787">
    <property type="entry name" value="T_IF-3_N_sf"/>
</dbReference>
<dbReference type="InterPro" id="IPR001288">
    <property type="entry name" value="Translation_initiation_fac_3"/>
</dbReference>
<dbReference type="InterPro" id="IPR019815">
    <property type="entry name" value="Translation_initiation_fac_3_C"/>
</dbReference>
<dbReference type="InterPro" id="IPR019814">
    <property type="entry name" value="Translation_initiation_fac_3_N"/>
</dbReference>
<dbReference type="NCBIfam" id="TIGR00168">
    <property type="entry name" value="infC"/>
    <property type="match status" value="1"/>
</dbReference>
<dbReference type="PANTHER" id="PTHR10938">
    <property type="entry name" value="TRANSLATION INITIATION FACTOR IF-3"/>
    <property type="match status" value="1"/>
</dbReference>
<dbReference type="PANTHER" id="PTHR10938:SF0">
    <property type="entry name" value="TRANSLATION INITIATION FACTOR IF-3, MITOCHONDRIAL"/>
    <property type="match status" value="1"/>
</dbReference>
<dbReference type="Pfam" id="PF00707">
    <property type="entry name" value="IF3_C"/>
    <property type="match status" value="1"/>
</dbReference>
<dbReference type="Pfam" id="PF05198">
    <property type="entry name" value="IF3_N"/>
    <property type="match status" value="1"/>
</dbReference>
<dbReference type="SUPFAM" id="SSF55200">
    <property type="entry name" value="Translation initiation factor IF3, C-terminal domain"/>
    <property type="match status" value="1"/>
</dbReference>
<dbReference type="SUPFAM" id="SSF54364">
    <property type="entry name" value="Translation initiation factor IF3, N-terminal domain"/>
    <property type="match status" value="1"/>
</dbReference>
<comment type="function">
    <text evidence="1">IF-3 binds to the 30S ribosomal subunit and shifts the equilibrium between 70S ribosomes and their 50S and 30S subunits in favor of the free subunits, thus enhancing the availability of 30S subunits on which protein synthesis initiation begins.</text>
</comment>
<comment type="subunit">
    <text evidence="1">Monomer.</text>
</comment>
<comment type="subcellular location">
    <subcellularLocation>
        <location evidence="1">Cytoplasm</location>
    </subcellularLocation>
</comment>
<comment type="similarity">
    <text evidence="1">Belongs to the IF-3 family.</text>
</comment>
<sequence>MPAPQKDGPRANRDIRGVREVQLIDDTGQNRGVVPFFDALNLAEEVGLDLVEIAPNSVPPVCKLLDYGRFRFNEQKKQNEARKRQKTVEVKEIKLRPGIDKHDYDTKMKSVHRFFEEGDKVKVTLRFRGREMAHQDIGLRLLERVKSETAEIAKVESEPMLEGRQMIMILAPR</sequence>